<feature type="chain" id="PRO_0000161281" description="Fumarate hydratase class II">
    <location>
        <begin position="1"/>
        <end position="463"/>
    </location>
</feature>
<feature type="active site" description="Proton donor/acceptor" evidence="1">
    <location>
        <position position="187"/>
    </location>
</feature>
<feature type="active site" evidence="1">
    <location>
        <position position="317"/>
    </location>
</feature>
<feature type="binding site" evidence="1">
    <location>
        <begin position="97"/>
        <end position="99"/>
    </location>
    <ligand>
        <name>substrate</name>
    </ligand>
</feature>
<feature type="binding site" description="in site B" evidence="1">
    <location>
        <begin position="128"/>
        <end position="131"/>
    </location>
    <ligand>
        <name>substrate</name>
    </ligand>
</feature>
<feature type="binding site" evidence="1">
    <location>
        <begin position="138"/>
        <end position="140"/>
    </location>
    <ligand>
        <name>substrate</name>
    </ligand>
</feature>
<feature type="binding site" evidence="1">
    <location>
        <position position="186"/>
    </location>
    <ligand>
        <name>substrate</name>
    </ligand>
</feature>
<feature type="binding site" evidence="1">
    <location>
        <position position="318"/>
    </location>
    <ligand>
        <name>substrate</name>
    </ligand>
</feature>
<feature type="binding site" evidence="1">
    <location>
        <begin position="323"/>
        <end position="325"/>
    </location>
    <ligand>
        <name>substrate</name>
    </ligand>
</feature>
<feature type="site" description="Important for catalytic activity" evidence="1">
    <location>
        <position position="330"/>
    </location>
</feature>
<dbReference type="EC" id="4.2.1.2" evidence="1"/>
<dbReference type="EMBL" id="AE001439">
    <property type="protein sequence ID" value="AAD06830.1"/>
    <property type="molecule type" value="Genomic_DNA"/>
</dbReference>
<dbReference type="PIR" id="H71830">
    <property type="entry name" value="H71830"/>
</dbReference>
<dbReference type="RefSeq" id="WP_001160501.1">
    <property type="nucleotide sequence ID" value="NC_000921.1"/>
</dbReference>
<dbReference type="SMR" id="Q9ZJQ9"/>
<dbReference type="KEGG" id="hpj:jhp_1245"/>
<dbReference type="PATRIC" id="fig|85963.30.peg.1326"/>
<dbReference type="eggNOG" id="COG0114">
    <property type="taxonomic scope" value="Bacteria"/>
</dbReference>
<dbReference type="UniPathway" id="UPA00223">
    <property type="reaction ID" value="UER01007"/>
</dbReference>
<dbReference type="Proteomes" id="UP000000804">
    <property type="component" value="Chromosome"/>
</dbReference>
<dbReference type="GO" id="GO:0005737">
    <property type="term" value="C:cytoplasm"/>
    <property type="evidence" value="ECO:0007669"/>
    <property type="project" value="UniProtKB-SubCell"/>
</dbReference>
<dbReference type="GO" id="GO:0004333">
    <property type="term" value="F:fumarate hydratase activity"/>
    <property type="evidence" value="ECO:0007669"/>
    <property type="project" value="UniProtKB-UniRule"/>
</dbReference>
<dbReference type="GO" id="GO:0006106">
    <property type="term" value="P:fumarate metabolic process"/>
    <property type="evidence" value="ECO:0007669"/>
    <property type="project" value="InterPro"/>
</dbReference>
<dbReference type="GO" id="GO:0006108">
    <property type="term" value="P:malate metabolic process"/>
    <property type="evidence" value="ECO:0007669"/>
    <property type="project" value="TreeGrafter"/>
</dbReference>
<dbReference type="GO" id="GO:0006099">
    <property type="term" value="P:tricarboxylic acid cycle"/>
    <property type="evidence" value="ECO:0007669"/>
    <property type="project" value="UniProtKB-UniRule"/>
</dbReference>
<dbReference type="CDD" id="cd01362">
    <property type="entry name" value="Fumarase_classII"/>
    <property type="match status" value="1"/>
</dbReference>
<dbReference type="FunFam" id="1.10.40.30:FF:000002">
    <property type="entry name" value="Fumarate hydratase class II"/>
    <property type="match status" value="1"/>
</dbReference>
<dbReference type="FunFam" id="1.10.275.10:FF:000001">
    <property type="entry name" value="Fumarate hydratase, mitochondrial"/>
    <property type="match status" value="1"/>
</dbReference>
<dbReference type="FunFam" id="1.20.200.10:FF:000001">
    <property type="entry name" value="Fumarate hydratase, mitochondrial"/>
    <property type="match status" value="1"/>
</dbReference>
<dbReference type="Gene3D" id="1.10.40.30">
    <property type="entry name" value="Fumarase/aspartase (C-terminal domain)"/>
    <property type="match status" value="1"/>
</dbReference>
<dbReference type="Gene3D" id="1.20.200.10">
    <property type="entry name" value="Fumarase/aspartase (Central domain)"/>
    <property type="match status" value="1"/>
</dbReference>
<dbReference type="Gene3D" id="1.10.275.10">
    <property type="entry name" value="Fumarase/aspartase (N-terminal domain)"/>
    <property type="match status" value="1"/>
</dbReference>
<dbReference type="HAMAP" id="MF_00743">
    <property type="entry name" value="FumaraseC"/>
    <property type="match status" value="1"/>
</dbReference>
<dbReference type="InterPro" id="IPR005677">
    <property type="entry name" value="Fum_hydII"/>
</dbReference>
<dbReference type="InterPro" id="IPR024083">
    <property type="entry name" value="Fumarase/histidase_N"/>
</dbReference>
<dbReference type="InterPro" id="IPR018951">
    <property type="entry name" value="Fumarase_C_C"/>
</dbReference>
<dbReference type="InterPro" id="IPR020557">
    <property type="entry name" value="Fumarate_lyase_CS"/>
</dbReference>
<dbReference type="InterPro" id="IPR000362">
    <property type="entry name" value="Fumarate_lyase_fam"/>
</dbReference>
<dbReference type="InterPro" id="IPR022761">
    <property type="entry name" value="Fumarate_lyase_N"/>
</dbReference>
<dbReference type="InterPro" id="IPR008948">
    <property type="entry name" value="L-Aspartase-like"/>
</dbReference>
<dbReference type="NCBIfam" id="TIGR00979">
    <property type="entry name" value="fumC_II"/>
    <property type="match status" value="1"/>
</dbReference>
<dbReference type="NCBIfam" id="NF008909">
    <property type="entry name" value="PRK12273.1"/>
    <property type="match status" value="1"/>
</dbReference>
<dbReference type="PANTHER" id="PTHR11444">
    <property type="entry name" value="ASPARTATEAMMONIA/ARGININOSUCCINATE/ADENYLOSUCCINATE LYASE"/>
    <property type="match status" value="1"/>
</dbReference>
<dbReference type="PANTHER" id="PTHR11444:SF1">
    <property type="entry name" value="FUMARATE HYDRATASE, MITOCHONDRIAL"/>
    <property type="match status" value="1"/>
</dbReference>
<dbReference type="Pfam" id="PF10415">
    <property type="entry name" value="FumaraseC_C"/>
    <property type="match status" value="1"/>
</dbReference>
<dbReference type="Pfam" id="PF00206">
    <property type="entry name" value="Lyase_1"/>
    <property type="match status" value="1"/>
</dbReference>
<dbReference type="PRINTS" id="PR00149">
    <property type="entry name" value="FUMRATELYASE"/>
</dbReference>
<dbReference type="SUPFAM" id="SSF48557">
    <property type="entry name" value="L-aspartase-like"/>
    <property type="match status" value="1"/>
</dbReference>
<dbReference type="PROSITE" id="PS00163">
    <property type="entry name" value="FUMARATE_LYASES"/>
    <property type="match status" value="1"/>
</dbReference>
<comment type="function">
    <text evidence="1">Involved in the TCA cycle. Catalyzes the stereospecific interconversion of fumarate to L-malate.</text>
</comment>
<comment type="catalytic activity">
    <reaction evidence="1">
        <text>(S)-malate = fumarate + H2O</text>
        <dbReference type="Rhea" id="RHEA:12460"/>
        <dbReference type="ChEBI" id="CHEBI:15377"/>
        <dbReference type="ChEBI" id="CHEBI:15589"/>
        <dbReference type="ChEBI" id="CHEBI:29806"/>
        <dbReference type="EC" id="4.2.1.2"/>
    </reaction>
</comment>
<comment type="pathway">
    <text evidence="1">Carbohydrate metabolism; tricarboxylic acid cycle; (S)-malate from fumarate: step 1/1.</text>
</comment>
<comment type="subunit">
    <text evidence="1">Homotetramer.</text>
</comment>
<comment type="subcellular location">
    <subcellularLocation>
        <location evidence="1">Cytoplasm</location>
    </subcellularLocation>
</comment>
<comment type="miscellaneous">
    <text evidence="1">There are 2 substrate-binding sites: the catalytic A site, and the non-catalytic B site that may play a role in the transfer of substrate or product between the active site and the solvent. Alternatively, the B site may bind allosteric effectors.</text>
</comment>
<comment type="similarity">
    <text evidence="1">Belongs to the class-II fumarase/aspartase family. Fumarase subfamily.</text>
</comment>
<gene>
    <name evidence="1" type="primary">fumC</name>
    <name type="ordered locus">jhp_1245</name>
</gene>
<organism>
    <name type="scientific">Helicobacter pylori (strain J99 / ATCC 700824)</name>
    <name type="common">Campylobacter pylori J99</name>
    <dbReference type="NCBI Taxonomy" id="85963"/>
    <lineage>
        <taxon>Bacteria</taxon>
        <taxon>Pseudomonadati</taxon>
        <taxon>Campylobacterota</taxon>
        <taxon>Epsilonproteobacteria</taxon>
        <taxon>Campylobacterales</taxon>
        <taxon>Helicobacteraceae</taxon>
        <taxon>Helicobacter</taxon>
    </lineage>
</organism>
<protein>
    <recommendedName>
        <fullName evidence="1">Fumarate hydratase class II</fullName>
        <shortName evidence="1">Fumarase C</shortName>
        <ecNumber evidence="1">4.2.1.2</ecNumber>
    </recommendedName>
    <alternativeName>
        <fullName evidence="1">Aerobic fumarase</fullName>
    </alternativeName>
    <alternativeName>
        <fullName evidence="1">Iron-independent fumarase</fullName>
    </alternativeName>
</protein>
<keyword id="KW-0963">Cytoplasm</keyword>
<keyword id="KW-0456">Lyase</keyword>
<keyword id="KW-0816">Tricarboxylic acid cycle</keyword>
<evidence type="ECO:0000255" key="1">
    <source>
        <dbReference type="HAMAP-Rule" id="MF_00743"/>
    </source>
</evidence>
<sequence>MQFRIEHDTMGEIKVDDSQYWGAQTQRSLENFKIGTEKMPKELIGAFAKLKRSLAVVNHKLGKLSLEKSQAIIKACDCILKGELCGEFPLAIWQTGSGTQTNMNLNEVIANKATEILGGNFREKKLIHPNDDVNMSQSSNDTFPTAMHVVSVLEITHKLLPSLENLLKTFKEKSQQFKEIVKIGRTHLQDATPLTLGQEFSGYASMLEHSKQQILESLEHLRELAIGGTAVGTGLNAHKELSEKVAEELSQFSGVKFISAPNKFHALTSHDAIAYAHGAFKALAANLMKIANDIRWLASGPRCGLGELNIPENEPGSSIMPGKVNPTQCEAMTMVAVQVMGNDTAIGIAASQGNFELNVFKPVIIYNFLQSLRLLSDSMESFNIHCASGIEPNKEKIDYYLHHSLMLVTALNPHVGYENAAKIAKNAHKKGISLKESALELKLLSAEDFDQFVVPEKMIGPKA</sequence>
<name>FUMC_HELPJ</name>
<reference key="1">
    <citation type="journal article" date="1999" name="Nature">
        <title>Genomic sequence comparison of two unrelated isolates of the human gastric pathogen Helicobacter pylori.</title>
        <authorList>
            <person name="Alm R.A."/>
            <person name="Ling L.-S.L."/>
            <person name="Moir D.T."/>
            <person name="King B.L."/>
            <person name="Brown E.D."/>
            <person name="Doig P.C."/>
            <person name="Smith D.R."/>
            <person name="Noonan B."/>
            <person name="Guild B.C."/>
            <person name="deJonge B.L."/>
            <person name="Carmel G."/>
            <person name="Tummino P.J."/>
            <person name="Caruso A."/>
            <person name="Uria-Nickelsen M."/>
            <person name="Mills D.M."/>
            <person name="Ives C."/>
            <person name="Gibson R."/>
            <person name="Merberg D."/>
            <person name="Mills S.D."/>
            <person name="Jiang Q."/>
            <person name="Taylor D.E."/>
            <person name="Vovis G.F."/>
            <person name="Trust T.J."/>
        </authorList>
    </citation>
    <scope>NUCLEOTIDE SEQUENCE [LARGE SCALE GENOMIC DNA]</scope>
    <source>
        <strain>J99 / ATCC 700824</strain>
    </source>
</reference>
<accession>Q9ZJQ9</accession>
<proteinExistence type="inferred from homology"/>